<sequence length="98" mass="8935">MTLFSSISSISNPMTSSKSSISSFGSGTSMGSNSIACGGCGGSGGILGLGLGLGLGLDLTGGSRSRGACGGNGGNRGNGNGGMGGGKSPCCGGCCCGI</sequence>
<evidence type="ECO:0000256" key="1">
    <source>
        <dbReference type="SAM" id="MobiDB-lite"/>
    </source>
</evidence>
<evidence type="ECO:0000305" key="2"/>
<name>HSL36_DICDI</name>
<proteinExistence type="inferred from homology"/>
<comment type="similarity">
    <text evidence="2">Belongs to the hssA/B family.</text>
</comment>
<protein>
    <recommendedName>
        <fullName>HssA/B-like protein 36</fullName>
    </recommendedName>
</protein>
<organism>
    <name type="scientific">Dictyostelium discoideum</name>
    <name type="common">Social amoeba</name>
    <dbReference type="NCBI Taxonomy" id="44689"/>
    <lineage>
        <taxon>Eukaryota</taxon>
        <taxon>Amoebozoa</taxon>
        <taxon>Evosea</taxon>
        <taxon>Eumycetozoa</taxon>
        <taxon>Dictyostelia</taxon>
        <taxon>Dictyosteliales</taxon>
        <taxon>Dictyosteliaceae</taxon>
        <taxon>Dictyostelium</taxon>
    </lineage>
</organism>
<reference key="1">
    <citation type="journal article" date="2005" name="Nature">
        <title>The genome of the social amoeba Dictyostelium discoideum.</title>
        <authorList>
            <person name="Eichinger L."/>
            <person name="Pachebat J.A."/>
            <person name="Gloeckner G."/>
            <person name="Rajandream M.A."/>
            <person name="Sucgang R."/>
            <person name="Berriman M."/>
            <person name="Song J."/>
            <person name="Olsen R."/>
            <person name="Szafranski K."/>
            <person name="Xu Q."/>
            <person name="Tunggal B."/>
            <person name="Kummerfeld S."/>
            <person name="Madera M."/>
            <person name="Konfortov B.A."/>
            <person name="Rivero F."/>
            <person name="Bankier A.T."/>
            <person name="Lehmann R."/>
            <person name="Hamlin N."/>
            <person name="Davies R."/>
            <person name="Gaudet P."/>
            <person name="Fey P."/>
            <person name="Pilcher K."/>
            <person name="Chen G."/>
            <person name="Saunders D."/>
            <person name="Sodergren E.J."/>
            <person name="Davis P."/>
            <person name="Kerhornou A."/>
            <person name="Nie X."/>
            <person name="Hall N."/>
            <person name="Anjard C."/>
            <person name="Hemphill L."/>
            <person name="Bason N."/>
            <person name="Farbrother P."/>
            <person name="Desany B."/>
            <person name="Just E."/>
            <person name="Morio T."/>
            <person name="Rost R."/>
            <person name="Churcher C.M."/>
            <person name="Cooper J."/>
            <person name="Haydock S."/>
            <person name="van Driessche N."/>
            <person name="Cronin A."/>
            <person name="Goodhead I."/>
            <person name="Muzny D.M."/>
            <person name="Mourier T."/>
            <person name="Pain A."/>
            <person name="Lu M."/>
            <person name="Harper D."/>
            <person name="Lindsay R."/>
            <person name="Hauser H."/>
            <person name="James K.D."/>
            <person name="Quiles M."/>
            <person name="Madan Babu M."/>
            <person name="Saito T."/>
            <person name="Buchrieser C."/>
            <person name="Wardroper A."/>
            <person name="Felder M."/>
            <person name="Thangavelu M."/>
            <person name="Johnson D."/>
            <person name="Knights A."/>
            <person name="Loulseged H."/>
            <person name="Mungall K.L."/>
            <person name="Oliver K."/>
            <person name="Price C."/>
            <person name="Quail M.A."/>
            <person name="Urushihara H."/>
            <person name="Hernandez J."/>
            <person name="Rabbinowitsch E."/>
            <person name="Steffen D."/>
            <person name="Sanders M."/>
            <person name="Ma J."/>
            <person name="Kohara Y."/>
            <person name="Sharp S."/>
            <person name="Simmonds M.N."/>
            <person name="Spiegler S."/>
            <person name="Tivey A."/>
            <person name="Sugano S."/>
            <person name="White B."/>
            <person name="Walker D."/>
            <person name="Woodward J.R."/>
            <person name="Winckler T."/>
            <person name="Tanaka Y."/>
            <person name="Shaulsky G."/>
            <person name="Schleicher M."/>
            <person name="Weinstock G.M."/>
            <person name="Rosenthal A."/>
            <person name="Cox E.C."/>
            <person name="Chisholm R.L."/>
            <person name="Gibbs R.A."/>
            <person name="Loomis W.F."/>
            <person name="Platzer M."/>
            <person name="Kay R.R."/>
            <person name="Williams J.G."/>
            <person name="Dear P.H."/>
            <person name="Noegel A.A."/>
            <person name="Barrell B.G."/>
            <person name="Kuspa A."/>
        </authorList>
    </citation>
    <scope>NUCLEOTIDE SEQUENCE [LARGE SCALE GENOMIC DNA]</scope>
    <source>
        <strain>AX4</strain>
    </source>
</reference>
<feature type="chain" id="PRO_0000330404" description="HssA/B-like protein 36">
    <location>
        <begin position="1"/>
        <end position="98"/>
    </location>
</feature>
<feature type="region of interest" description="Disordered" evidence="1">
    <location>
        <begin position="1"/>
        <end position="29"/>
    </location>
</feature>
<keyword id="KW-1185">Reference proteome</keyword>
<dbReference type="EMBL" id="AAFI02000039">
    <property type="protein sequence ID" value="EAL67005.1"/>
    <property type="molecule type" value="Genomic_DNA"/>
</dbReference>
<dbReference type="RefSeq" id="XP_640988.1">
    <property type="nucleotide sequence ID" value="XM_635896.1"/>
</dbReference>
<dbReference type="PaxDb" id="44689-DDB0252790"/>
<dbReference type="EnsemblProtists" id="EAL67005">
    <property type="protein sequence ID" value="EAL67005"/>
    <property type="gene ID" value="DDB_G0280927"/>
</dbReference>
<dbReference type="GeneID" id="8622796"/>
<dbReference type="KEGG" id="ddi:DDB_G0280927"/>
<dbReference type="dictyBase" id="DDB_G0280927"/>
<dbReference type="HOGENOM" id="CLU_181850_0_0_1"/>
<dbReference type="InParanoid" id="Q54UN3"/>
<dbReference type="PRO" id="PR:Q54UN3"/>
<dbReference type="Proteomes" id="UP000002195">
    <property type="component" value="Chromosome 3"/>
</dbReference>
<dbReference type="GO" id="GO:0030587">
    <property type="term" value="P:sorocarp development"/>
    <property type="evidence" value="ECO:0000318"/>
    <property type="project" value="GO_Central"/>
</dbReference>
<dbReference type="InterPro" id="IPR050533">
    <property type="entry name" value="HssA/B-like_chaperone"/>
</dbReference>
<dbReference type="InterPro" id="IPR008455">
    <property type="entry name" value="HssA/B-related"/>
</dbReference>
<dbReference type="PANTHER" id="PTHR31059">
    <property type="entry name" value="HSSA/B-LIKE PROTEIN 1-RELATED-RELATED"/>
    <property type="match status" value="1"/>
</dbReference>
<dbReference type="PANTHER" id="PTHR31059:SF5">
    <property type="entry name" value="HSSA_B-LIKE PROTEIN 1-RELATED"/>
    <property type="match status" value="1"/>
</dbReference>
<dbReference type="Pfam" id="PF05710">
    <property type="entry name" value="Coiled"/>
    <property type="match status" value="1"/>
</dbReference>
<accession>Q54UN3</accession>
<gene>
    <name type="primary">hssl36</name>
    <name type="ORF">DDB_G0280927</name>
</gene>